<evidence type="ECO:0000250" key="1"/>
<evidence type="ECO:0000250" key="2">
    <source>
        <dbReference type="UniProtKB" id="Q8TEB7"/>
    </source>
</evidence>
<evidence type="ECO:0000255" key="3"/>
<evidence type="ECO:0000255" key="4">
    <source>
        <dbReference type="PROSITE-ProRule" id="PRU00175"/>
    </source>
</evidence>
<evidence type="ECO:0000256" key="5">
    <source>
        <dbReference type="SAM" id="MobiDB-lite"/>
    </source>
</evidence>
<evidence type="ECO:0000269" key="6">
    <source>
    </source>
</evidence>
<evidence type="ECO:0000269" key="7">
    <source>
    </source>
</evidence>
<evidence type="ECO:0000269" key="8">
    <source>
    </source>
</evidence>
<evidence type="ECO:0000305" key="9"/>
<gene>
    <name type="primary">Rnf128</name>
    <name type="synonym">Grail</name>
    <name type="synonym">Greul1</name>
    <name type="ORF">MNCb-3816</name>
</gene>
<comment type="function">
    <text evidence="2 6 7 8">E3 ubiquitin-protein ligase that catalyzes 'Lys-27', 'Lys-48'- or 'Lys-63'-linked polyubiquitin chains formation and plays a role in different biological processes such as modulation of immune response, cytoskeletal dynamics or protein homeostasis (PubMed:12705856, PubMed:37344492). Inhibits IL2 and IL4 transcription, thereby playing an important role in the induction of the anergic phenotype, a long-term stable state of T-lymphocyte unresponsiveness to antigenic stimulation associated with the blockade of interleukin production. Ubiquitinates ARPC5 with 'Lys-48' linkages and COR1A with 'Lys-63' linkages leading to their degradation, down-regulation of these cytoskeletal components results in impaired lamellipodium formation and reduced accumulation of F-actin at the immunological synapse. Functions in the patterning of the dorsal ectoderm; sensitizes ectoderm to respond to neural-inducing signals. Plays a positive role in innate immune response by promoting 'Lys-63'-linked ubiquitination of TBK1 after RNA- or DNA-virus infection. Regulates alveolar macrophage activation and neutrophil infiltration by interacting with TLR4, targeting it for degradation, and inhibiting NF-kappa-B activation, hence decreasing pro-inflammatory cytokines (PubMed:37344492). Negatively regulates the IL-3/STAT5 signaling pathway by facilitating 'Lys-27'-linked polyubiquitination of IL3RA leading to its degradation via lysosomal pathway. Directly regulates the N-glycosylation process in the endoplasmic reticulum by targeting the glycosyl-transferase RPN1 for ubiquitination and degradation. Other substrates targeted for degradation by RNF128 include transmembrane proteins CD40L, CD83 or the tetraspanin CD151.</text>
</comment>
<comment type="catalytic activity">
    <reaction evidence="2">
        <text>S-ubiquitinyl-[E2 ubiquitin-conjugating enzyme]-L-cysteine + [acceptor protein]-L-lysine = [E2 ubiquitin-conjugating enzyme]-L-cysteine + N(6)-ubiquitinyl-[acceptor protein]-L-lysine.</text>
        <dbReference type="EC" id="2.3.2.27"/>
    </reaction>
</comment>
<comment type="pathway">
    <text evidence="2">Protein modification; protein ubiquitination.</text>
</comment>
<comment type="subcellular location">
    <subcellularLocation>
        <location evidence="2">Cytoplasm</location>
    </subcellularLocation>
    <subcellularLocation>
        <location evidence="2">Endomembrane system</location>
        <topology evidence="2">Single-pass membrane protein</topology>
    </subcellularLocation>
    <subcellularLocation>
        <location evidence="2">Cytoplasm</location>
        <location evidence="2">Cytoskeleton</location>
    </subcellularLocation>
    <subcellularLocation>
        <location evidence="2">Cytoplasm</location>
        <location evidence="2">Perinuclear region</location>
    </subcellularLocation>
    <text evidence="1">Localized in an asymmetric perinuclear punctate manner. Localizes to the internal pool of the transferrin recycling endosomal pathway. Partially colocalized with the endoplasmic reticulum resident HSPA5, with Golgi resident STX5, and with the late endosomal GTPase RAB7A (By similarity).</text>
</comment>
<comment type="tissue specificity">
    <text evidence="7">Expressed in brain, kidney, heart, liver, ovary, testis and thymus. Expression increased as early as 4 hours by 5- to 7-fold in anergized cultures as compared to resting or activated cells.</text>
</comment>
<comment type="developmental stage">
    <text evidence="7">At 6.0 dpc, expressed in both the extraembryonic endoderm and extraembryonic ectoderm. After the beginning of gastrulation, expression remains extraembryonic, and is mostly confined to the visceral endoderm. At 8.5 dpc, expression appears within the mesodermally derived allantois, and is highly expressed in the epithelial layer of the yolk sac. At 9.5 dpc, expressed in the hindgut and adjoining yolk sac. At stage 10 dpc, appears to be widely expressed throughout the embryo with higher expression within the branchial arches and within intersomitic endothelial cells.</text>
</comment>
<comment type="induction">
    <text evidence="2">Induced under anergic conditions. Up-regulated during T-cell anergy induction following signaling through the T-cell antigen receptor.</text>
</comment>
<comment type="domain">
    <text evidence="2">Binding to E2 ubiquitin-conjugating enzyme requires an intact RING finger domain.</text>
</comment>
<comment type="PTM">
    <text evidence="2">Auto-ubiquitinated. Controls the development of T-cell clonal anergy by ubiquitination.</text>
</comment>
<comment type="disruption phenotype">
    <text evidence="8">LPS stimulation increases macrophage and neutrophil infiltration in the alveolar space of RNF128 knock-out mice.</text>
</comment>
<feature type="signal peptide" evidence="3">
    <location>
        <begin position="1"/>
        <end position="38"/>
    </location>
</feature>
<feature type="chain" id="PRO_0000261413" description="E3 ubiquitin-protein ligase RNF128">
    <location>
        <begin position="39"/>
        <end position="428"/>
    </location>
</feature>
<feature type="transmembrane region" description="Helical" evidence="3">
    <location>
        <begin position="208"/>
        <end position="228"/>
    </location>
</feature>
<feature type="domain" description="PA">
    <location>
        <begin position="75"/>
        <end position="183"/>
    </location>
</feature>
<feature type="zinc finger region" description="RING-type; atypical" evidence="4">
    <location>
        <begin position="277"/>
        <end position="318"/>
    </location>
</feature>
<feature type="region of interest" description="Disordered" evidence="5">
    <location>
        <begin position="342"/>
        <end position="428"/>
    </location>
</feature>
<feature type="compositionally biased region" description="Polar residues" evidence="5">
    <location>
        <begin position="342"/>
        <end position="351"/>
    </location>
</feature>
<feature type="glycosylation site" description="N-linked (GlcNAc...) asparagine" evidence="3">
    <location>
        <position position="48"/>
    </location>
</feature>
<feature type="glycosylation site" description="N-linked (GlcNAc...) asparagine" evidence="3">
    <location>
        <position position="59"/>
    </location>
</feature>
<feature type="glycosylation site" description="N-linked (GlcNAc...) asparagine" evidence="3">
    <location>
        <position position="101"/>
    </location>
</feature>
<feature type="mutagenesis site" description="Loss of ubiquitination activity." evidence="6">
    <original>C</original>
    <variation>G</variation>
    <location>
        <position position="277"/>
    </location>
</feature>
<feature type="mutagenesis site" description="Loss of ubiquitination activity." evidence="6">
    <original>C</original>
    <variation>G</variation>
    <location>
        <position position="280"/>
    </location>
</feature>
<feature type="sequence conflict" description="In Ref. 4; BAB23613." evidence="9" ref="4">
    <original>G</original>
    <variation>S</variation>
    <location>
        <position position="125"/>
    </location>
</feature>
<feature type="sequence conflict" description="In Ref. 4; BAB23613." evidence="9" ref="4">
    <original>K</original>
    <variation>N</variation>
    <location>
        <position position="131"/>
    </location>
</feature>
<feature type="sequence conflict" description="In Ref. 3; BAA95033." evidence="9" ref="3">
    <original>I</original>
    <variation>V</variation>
    <location>
        <position position="132"/>
    </location>
</feature>
<feature type="sequence conflict" description="In Ref. 4; BAE27025." evidence="9" ref="4">
    <original>P</original>
    <variation>H</variation>
    <location>
        <position position="352"/>
    </location>
</feature>
<proteinExistence type="evidence at protein level"/>
<protein>
    <recommendedName>
        <fullName>E3 ubiquitin-protein ligase RNF128</fullName>
        <ecNumber>2.3.2.27</ecNumber>
    </recommendedName>
    <alternativeName>
        <fullName>Gene related to anergy in lymphocytes protein</fullName>
    </alternativeName>
    <alternativeName>
        <fullName>Goliath-related E3 ubiquitin-protein ligase 1</fullName>
    </alternativeName>
    <alternativeName>
        <fullName>RING finger protein 128</fullName>
    </alternativeName>
    <alternativeName>
        <fullName evidence="9">RING-type E3 ubiquitin transferase RNF128</fullName>
    </alternativeName>
</protein>
<accession>Q9D304</accession>
<accession>Q3UJY0</accession>
<accession>Q9CVG1</accession>
<accession>Q9DBN3</accession>
<accession>Q9JJF8</accession>
<keyword id="KW-0963">Cytoplasm</keyword>
<keyword id="KW-0206">Cytoskeleton</keyword>
<keyword id="KW-0325">Glycoprotein</keyword>
<keyword id="KW-0472">Membrane</keyword>
<keyword id="KW-0479">Metal-binding</keyword>
<keyword id="KW-1185">Reference proteome</keyword>
<keyword id="KW-0732">Signal</keyword>
<keyword id="KW-0808">Transferase</keyword>
<keyword id="KW-0812">Transmembrane</keyword>
<keyword id="KW-1133">Transmembrane helix</keyword>
<keyword id="KW-0832">Ubl conjugation</keyword>
<keyword id="KW-0833">Ubl conjugation pathway</keyword>
<keyword id="KW-0862">Zinc</keyword>
<keyword id="KW-0863">Zinc-finger</keyword>
<sequence>MGPPPGIGVYCRGGCGAARLLAWCFLLALSPHAPGSRGAEAVWTAYLNVSWRVPHTGVNRTVWELSEEGVYGQDSPLEPVSGVLVPPDGPGALNACNPHTNFTVPTVWGSTVQVSWLALIQRGGGCTFADKIHLASERGASGAVIFNFPGTRNEVIPMSHPGAGDIVAIMIGNLKGTKILQSIQRGIQVTMVIEVGKKHGPWVNHYSIFFVSVSFFIITAATVGYFIFYSARRLRNARAQSRKQRQLKADAKKAIGKLQLRTLKQGDKEIGPDGDSCAVCIELYKPNDLVRILTCNHIFHKTCVDPWLLEHRTCPMCKCDILKALGIEVDVEDGSVSLQVPVSNEASNTASPHEEDSRSETASSGYASVQGADEPPLEEHAQSANENLQLVNHEANSVAVDVVPHVDNPTFEEDETPDQEAAVREIKS</sequence>
<reference key="1">
    <citation type="journal article" date="2002" name="Dev. Biol.">
        <title>The E3 ubiquitin ligase GREUL1 anteriorizes ectoderm during Xenopus development.</title>
        <authorList>
            <person name="Borchers A.G.M."/>
            <person name="Hufton A.L."/>
            <person name="Eldridge A.G."/>
            <person name="Jackson P.K."/>
            <person name="Harland R.M."/>
            <person name="Baker J.C."/>
        </authorList>
    </citation>
    <scope>NUCLEOTIDE SEQUENCE [MRNA]</scope>
    <scope>FUNCTION</scope>
    <scope>MUTAGENESIS OF CYS-277 AND CYS-280</scope>
    <source>
        <strain>CD-1</strain>
    </source>
</reference>
<reference key="2">
    <citation type="journal article" date="2003" name="Immunity">
        <title>GRAIL: an E3 ubiquitin ligase that inhibits cytokine gene transcription is expressed in anergic CD4+ T cells.</title>
        <authorList>
            <person name="Anandasabapathy N."/>
            <person name="Ford G.S."/>
            <person name="Bloom D."/>
            <person name="Holness C."/>
            <person name="Paragas V."/>
            <person name="Seroogy C."/>
            <person name="Skrenta H."/>
            <person name="Hollenhorst M."/>
            <person name="Fathman C.G."/>
            <person name="Soares L."/>
        </authorList>
    </citation>
    <scope>NUCLEOTIDE SEQUENCE [MRNA]</scope>
    <scope>FUNCTION IN UBIQUITINATION</scope>
    <scope>TISSUE SPECIFICITY</scope>
    <scope>DEVELOPMENTAL STAGE</scope>
    <scope>MUTAGENESIS</scope>
</reference>
<reference key="3">
    <citation type="submission" date="2000-04" db="EMBL/GenBank/DDBJ databases">
        <title>Isolation of full-length cDNA clones from mouse brain cDNA library made by oligo-capping method.</title>
        <authorList>
            <person name="Osada N."/>
            <person name="Kusuda J."/>
            <person name="Tanuma R."/>
            <person name="Ito A."/>
            <person name="Hirata M."/>
            <person name="Sugano S."/>
            <person name="Hashimoto K."/>
        </authorList>
    </citation>
    <scope>NUCLEOTIDE SEQUENCE [LARGE SCALE MRNA]</scope>
    <source>
        <strain>C57BL/6J</strain>
        <tissue>Brain</tissue>
    </source>
</reference>
<reference key="4">
    <citation type="journal article" date="2005" name="Science">
        <title>The transcriptional landscape of the mammalian genome.</title>
        <authorList>
            <person name="Carninci P."/>
            <person name="Kasukawa T."/>
            <person name="Katayama S."/>
            <person name="Gough J."/>
            <person name="Frith M.C."/>
            <person name="Maeda N."/>
            <person name="Oyama R."/>
            <person name="Ravasi T."/>
            <person name="Lenhard B."/>
            <person name="Wells C."/>
            <person name="Kodzius R."/>
            <person name="Shimokawa K."/>
            <person name="Bajic V.B."/>
            <person name="Brenner S.E."/>
            <person name="Batalov S."/>
            <person name="Forrest A.R."/>
            <person name="Zavolan M."/>
            <person name="Davis M.J."/>
            <person name="Wilming L.G."/>
            <person name="Aidinis V."/>
            <person name="Allen J.E."/>
            <person name="Ambesi-Impiombato A."/>
            <person name="Apweiler R."/>
            <person name="Aturaliya R.N."/>
            <person name="Bailey T.L."/>
            <person name="Bansal M."/>
            <person name="Baxter L."/>
            <person name="Beisel K.W."/>
            <person name="Bersano T."/>
            <person name="Bono H."/>
            <person name="Chalk A.M."/>
            <person name="Chiu K.P."/>
            <person name="Choudhary V."/>
            <person name="Christoffels A."/>
            <person name="Clutterbuck D.R."/>
            <person name="Crowe M.L."/>
            <person name="Dalla E."/>
            <person name="Dalrymple B.P."/>
            <person name="de Bono B."/>
            <person name="Della Gatta G."/>
            <person name="di Bernardo D."/>
            <person name="Down T."/>
            <person name="Engstrom P."/>
            <person name="Fagiolini M."/>
            <person name="Faulkner G."/>
            <person name="Fletcher C.F."/>
            <person name="Fukushima T."/>
            <person name="Furuno M."/>
            <person name="Futaki S."/>
            <person name="Gariboldi M."/>
            <person name="Georgii-Hemming P."/>
            <person name="Gingeras T.R."/>
            <person name="Gojobori T."/>
            <person name="Green R.E."/>
            <person name="Gustincich S."/>
            <person name="Harbers M."/>
            <person name="Hayashi Y."/>
            <person name="Hensch T.K."/>
            <person name="Hirokawa N."/>
            <person name="Hill D."/>
            <person name="Huminiecki L."/>
            <person name="Iacono M."/>
            <person name="Ikeo K."/>
            <person name="Iwama A."/>
            <person name="Ishikawa T."/>
            <person name="Jakt M."/>
            <person name="Kanapin A."/>
            <person name="Katoh M."/>
            <person name="Kawasawa Y."/>
            <person name="Kelso J."/>
            <person name="Kitamura H."/>
            <person name="Kitano H."/>
            <person name="Kollias G."/>
            <person name="Krishnan S.P."/>
            <person name="Kruger A."/>
            <person name="Kummerfeld S.K."/>
            <person name="Kurochkin I.V."/>
            <person name="Lareau L.F."/>
            <person name="Lazarevic D."/>
            <person name="Lipovich L."/>
            <person name="Liu J."/>
            <person name="Liuni S."/>
            <person name="McWilliam S."/>
            <person name="Madan Babu M."/>
            <person name="Madera M."/>
            <person name="Marchionni L."/>
            <person name="Matsuda H."/>
            <person name="Matsuzawa S."/>
            <person name="Miki H."/>
            <person name="Mignone F."/>
            <person name="Miyake S."/>
            <person name="Morris K."/>
            <person name="Mottagui-Tabar S."/>
            <person name="Mulder N."/>
            <person name="Nakano N."/>
            <person name="Nakauchi H."/>
            <person name="Ng P."/>
            <person name="Nilsson R."/>
            <person name="Nishiguchi S."/>
            <person name="Nishikawa S."/>
            <person name="Nori F."/>
            <person name="Ohara O."/>
            <person name="Okazaki Y."/>
            <person name="Orlando V."/>
            <person name="Pang K.C."/>
            <person name="Pavan W.J."/>
            <person name="Pavesi G."/>
            <person name="Pesole G."/>
            <person name="Petrovsky N."/>
            <person name="Piazza S."/>
            <person name="Reed J."/>
            <person name="Reid J.F."/>
            <person name="Ring B.Z."/>
            <person name="Ringwald M."/>
            <person name="Rost B."/>
            <person name="Ruan Y."/>
            <person name="Salzberg S.L."/>
            <person name="Sandelin A."/>
            <person name="Schneider C."/>
            <person name="Schoenbach C."/>
            <person name="Sekiguchi K."/>
            <person name="Semple C.A."/>
            <person name="Seno S."/>
            <person name="Sessa L."/>
            <person name="Sheng Y."/>
            <person name="Shibata Y."/>
            <person name="Shimada H."/>
            <person name="Shimada K."/>
            <person name="Silva D."/>
            <person name="Sinclair B."/>
            <person name="Sperling S."/>
            <person name="Stupka E."/>
            <person name="Sugiura K."/>
            <person name="Sultana R."/>
            <person name="Takenaka Y."/>
            <person name="Taki K."/>
            <person name="Tammoja K."/>
            <person name="Tan S.L."/>
            <person name="Tang S."/>
            <person name="Taylor M.S."/>
            <person name="Tegner J."/>
            <person name="Teichmann S.A."/>
            <person name="Ueda H.R."/>
            <person name="van Nimwegen E."/>
            <person name="Verardo R."/>
            <person name="Wei C.L."/>
            <person name="Yagi K."/>
            <person name="Yamanishi H."/>
            <person name="Zabarovsky E."/>
            <person name="Zhu S."/>
            <person name="Zimmer A."/>
            <person name="Hide W."/>
            <person name="Bult C."/>
            <person name="Grimmond S.M."/>
            <person name="Teasdale R.D."/>
            <person name="Liu E.T."/>
            <person name="Brusic V."/>
            <person name="Quackenbush J."/>
            <person name="Wahlestedt C."/>
            <person name="Mattick J.S."/>
            <person name="Hume D.A."/>
            <person name="Kai C."/>
            <person name="Sasaki D."/>
            <person name="Tomaru Y."/>
            <person name="Fukuda S."/>
            <person name="Kanamori-Katayama M."/>
            <person name="Suzuki M."/>
            <person name="Aoki J."/>
            <person name="Arakawa T."/>
            <person name="Iida J."/>
            <person name="Imamura K."/>
            <person name="Itoh M."/>
            <person name="Kato T."/>
            <person name="Kawaji H."/>
            <person name="Kawagashira N."/>
            <person name="Kawashima T."/>
            <person name="Kojima M."/>
            <person name="Kondo S."/>
            <person name="Konno H."/>
            <person name="Nakano K."/>
            <person name="Ninomiya N."/>
            <person name="Nishio T."/>
            <person name="Okada M."/>
            <person name="Plessy C."/>
            <person name="Shibata K."/>
            <person name="Shiraki T."/>
            <person name="Suzuki S."/>
            <person name="Tagami M."/>
            <person name="Waki K."/>
            <person name="Watahiki A."/>
            <person name="Okamura-Oho Y."/>
            <person name="Suzuki H."/>
            <person name="Kawai J."/>
            <person name="Hayashizaki Y."/>
        </authorList>
    </citation>
    <scope>NUCLEOTIDE SEQUENCE [LARGE SCALE MRNA]</scope>
    <source>
        <strain>C57BL/6J</strain>
        <tissue>Cecum</tissue>
        <tissue>Liver</tissue>
        <tissue>Small intestine</tissue>
    </source>
</reference>
<reference key="5">
    <citation type="journal article" date="2004" name="Genome Res.">
        <title>The status, quality, and expansion of the NIH full-length cDNA project: the Mammalian Gene Collection (MGC).</title>
        <authorList>
            <consortium name="The MGC Project Team"/>
        </authorList>
    </citation>
    <scope>NUCLEOTIDE SEQUENCE [LARGE SCALE MRNA]</scope>
    <source>
        <strain>129</strain>
        <tissue>Mammary tumor</tissue>
    </source>
</reference>
<reference key="6">
    <citation type="journal article" date="2023" name="Cell Death Dis.">
        <title>RNF128 regulates neutrophil infiltration and myeloperoxidase functions to prevent acute lung injury.</title>
        <authorList>
            <person name="Liu P.Y."/>
            <person name="Chen C.Y."/>
            <person name="Lin Y.L."/>
            <person name="Lin C.M."/>
            <person name="Tsai W.C."/>
            <person name="Tsai Y.L."/>
            <person name="Lin G.J."/>
            <person name="Chen Y.G."/>
            <person name="Wang S.Y."/>
            <person name="Sun R.N."/>
            <person name="Huang Y.C."/>
            <person name="Chang H."/>
            <person name="Chen Y.C."/>
        </authorList>
    </citation>
    <scope>FUNCTION</scope>
    <scope>DISRUPTION PHENOTYPE</scope>
</reference>
<organism>
    <name type="scientific">Mus musculus</name>
    <name type="common">Mouse</name>
    <dbReference type="NCBI Taxonomy" id="10090"/>
    <lineage>
        <taxon>Eukaryota</taxon>
        <taxon>Metazoa</taxon>
        <taxon>Chordata</taxon>
        <taxon>Craniata</taxon>
        <taxon>Vertebrata</taxon>
        <taxon>Euteleostomi</taxon>
        <taxon>Mammalia</taxon>
        <taxon>Eutheria</taxon>
        <taxon>Euarchontoglires</taxon>
        <taxon>Glires</taxon>
        <taxon>Rodentia</taxon>
        <taxon>Myomorpha</taxon>
        <taxon>Muroidea</taxon>
        <taxon>Muridae</taxon>
        <taxon>Murinae</taxon>
        <taxon>Mus</taxon>
        <taxon>Mus</taxon>
    </lineage>
</organism>
<name>RN128_MOUSE</name>
<dbReference type="EC" id="2.3.2.27"/>
<dbReference type="EMBL" id="AY112656">
    <property type="protein sequence ID" value="AAM51876.1"/>
    <property type="molecule type" value="mRNA"/>
</dbReference>
<dbReference type="EMBL" id="AF426411">
    <property type="protein sequence ID" value="AAL34514.1"/>
    <property type="molecule type" value="mRNA"/>
</dbReference>
<dbReference type="EMBL" id="AB041548">
    <property type="protein sequence ID" value="BAA95033.1"/>
    <property type="molecule type" value="mRNA"/>
</dbReference>
<dbReference type="EMBL" id="AK004847">
    <property type="protein sequence ID" value="BAB23613.1"/>
    <property type="molecule type" value="mRNA"/>
</dbReference>
<dbReference type="EMBL" id="AK008312">
    <property type="protein sequence ID" value="BAB25595.3"/>
    <property type="molecule type" value="mRNA"/>
</dbReference>
<dbReference type="EMBL" id="AK018582">
    <property type="protein sequence ID" value="BAB31291.1"/>
    <property type="molecule type" value="mRNA"/>
</dbReference>
<dbReference type="EMBL" id="AK146266">
    <property type="protein sequence ID" value="BAE27025.1"/>
    <property type="molecule type" value="mRNA"/>
</dbReference>
<dbReference type="EMBL" id="AK167031">
    <property type="protein sequence ID" value="BAE39203.1"/>
    <property type="molecule type" value="mRNA"/>
</dbReference>
<dbReference type="EMBL" id="BC010477">
    <property type="protein sequence ID" value="AAH10477.1"/>
    <property type="molecule type" value="mRNA"/>
</dbReference>
<dbReference type="CCDS" id="CCDS30435.1"/>
<dbReference type="RefSeq" id="NP_001241690.1">
    <property type="nucleotide sequence ID" value="NM_001254761.1"/>
</dbReference>
<dbReference type="RefSeq" id="NP_075759.3">
    <property type="nucleotide sequence ID" value="NM_023270.5"/>
</dbReference>
<dbReference type="SMR" id="Q9D304"/>
<dbReference type="BioGRID" id="211790">
    <property type="interactions" value="5"/>
</dbReference>
<dbReference type="FunCoup" id="Q9D304">
    <property type="interactions" value="821"/>
</dbReference>
<dbReference type="STRING" id="10090.ENSMUSP00000108649"/>
<dbReference type="GlyCosmos" id="Q9D304">
    <property type="glycosylation" value="3 sites, No reported glycans"/>
</dbReference>
<dbReference type="GlyGen" id="Q9D304">
    <property type="glycosylation" value="3 sites, 2 N-linked glycans (2 sites)"/>
</dbReference>
<dbReference type="iPTMnet" id="Q9D304"/>
<dbReference type="PhosphoSitePlus" id="Q9D304"/>
<dbReference type="PaxDb" id="10090-ENSMUSP00000108649"/>
<dbReference type="ProteomicsDB" id="300412"/>
<dbReference type="Antibodypedia" id="15043">
    <property type="antibodies" value="143 antibodies from 26 providers"/>
</dbReference>
<dbReference type="DNASU" id="66889"/>
<dbReference type="Ensembl" id="ENSMUST00000113026.2">
    <property type="protein sequence ID" value="ENSMUSP00000108649.2"/>
    <property type="gene ID" value="ENSMUSG00000031438.12"/>
</dbReference>
<dbReference type="GeneID" id="66889"/>
<dbReference type="KEGG" id="mmu:66889"/>
<dbReference type="UCSC" id="uc009uki.2">
    <property type="organism name" value="mouse"/>
</dbReference>
<dbReference type="AGR" id="MGI:1914139"/>
<dbReference type="CTD" id="79589"/>
<dbReference type="MGI" id="MGI:1914139">
    <property type="gene designation" value="Rnf128"/>
</dbReference>
<dbReference type="VEuPathDB" id="HostDB:ENSMUSG00000031438"/>
<dbReference type="eggNOG" id="KOG4628">
    <property type="taxonomic scope" value="Eukaryota"/>
</dbReference>
<dbReference type="GeneTree" id="ENSGT00940000158347"/>
<dbReference type="HOGENOM" id="CLU_049885_0_0_1"/>
<dbReference type="InParanoid" id="Q9D304"/>
<dbReference type="OMA" id="NKSRFFW"/>
<dbReference type="OrthoDB" id="5357315at2759"/>
<dbReference type="PhylomeDB" id="Q9D304"/>
<dbReference type="TreeFam" id="TF317486"/>
<dbReference type="Reactome" id="R-MMU-5689880">
    <property type="pathway name" value="Ub-specific processing proteases"/>
</dbReference>
<dbReference type="Reactome" id="R-MMU-5689896">
    <property type="pathway name" value="Ovarian tumor domain proteases"/>
</dbReference>
<dbReference type="UniPathway" id="UPA00143"/>
<dbReference type="BioGRID-ORCS" id="66889">
    <property type="hits" value="2 hits in 78 CRISPR screens"/>
</dbReference>
<dbReference type="ChiTaRS" id="Rnf128">
    <property type="organism name" value="mouse"/>
</dbReference>
<dbReference type="PRO" id="PR:Q9D304"/>
<dbReference type="Proteomes" id="UP000000589">
    <property type="component" value="Chromosome X"/>
</dbReference>
<dbReference type="RNAct" id="Q9D304">
    <property type="molecule type" value="protein"/>
</dbReference>
<dbReference type="Bgee" id="ENSMUSG00000031438">
    <property type="expression patterns" value="Expressed in urinary bladder urothelium and 245 other cell types or tissues"/>
</dbReference>
<dbReference type="ExpressionAtlas" id="Q9D304">
    <property type="expression patterns" value="baseline and differential"/>
</dbReference>
<dbReference type="GO" id="GO:0005856">
    <property type="term" value="C:cytoskeleton"/>
    <property type="evidence" value="ECO:0007669"/>
    <property type="project" value="UniProtKB-SubCell"/>
</dbReference>
<dbReference type="GO" id="GO:0005783">
    <property type="term" value="C:endoplasmic reticulum"/>
    <property type="evidence" value="ECO:0000314"/>
    <property type="project" value="MGI"/>
</dbReference>
<dbReference type="GO" id="GO:0005794">
    <property type="term" value="C:Golgi apparatus"/>
    <property type="evidence" value="ECO:0000314"/>
    <property type="project" value="MGI"/>
</dbReference>
<dbReference type="GO" id="GO:0005770">
    <property type="term" value="C:late endosome"/>
    <property type="evidence" value="ECO:0000314"/>
    <property type="project" value="MGI"/>
</dbReference>
<dbReference type="GO" id="GO:0016020">
    <property type="term" value="C:membrane"/>
    <property type="evidence" value="ECO:0007669"/>
    <property type="project" value="UniProtKB-KW"/>
</dbReference>
<dbReference type="GO" id="GO:0048471">
    <property type="term" value="C:perinuclear region of cytoplasm"/>
    <property type="evidence" value="ECO:0007669"/>
    <property type="project" value="UniProtKB-SubCell"/>
</dbReference>
<dbReference type="GO" id="GO:0061630">
    <property type="term" value="F:ubiquitin protein ligase activity"/>
    <property type="evidence" value="ECO:0000314"/>
    <property type="project" value="MGI"/>
</dbReference>
<dbReference type="GO" id="GO:0008270">
    <property type="term" value="F:zinc ion binding"/>
    <property type="evidence" value="ECO:0007669"/>
    <property type="project" value="UniProtKB-KW"/>
</dbReference>
<dbReference type="GO" id="GO:0001818">
    <property type="term" value="P:negative regulation of cytokine production"/>
    <property type="evidence" value="ECO:0000314"/>
    <property type="project" value="MGI"/>
</dbReference>
<dbReference type="GO" id="GO:0016567">
    <property type="term" value="P:protein ubiquitination"/>
    <property type="evidence" value="ECO:0007669"/>
    <property type="project" value="UniProtKB-UniPathway"/>
</dbReference>
<dbReference type="GO" id="GO:0031647">
    <property type="term" value="P:regulation of protein stability"/>
    <property type="evidence" value="ECO:0007669"/>
    <property type="project" value="Ensembl"/>
</dbReference>
<dbReference type="CDD" id="cd02122">
    <property type="entry name" value="PA_GRAIL_like"/>
    <property type="match status" value="1"/>
</dbReference>
<dbReference type="CDD" id="cd16802">
    <property type="entry name" value="RING-H2_RNF128-like"/>
    <property type="match status" value="1"/>
</dbReference>
<dbReference type="FunFam" id="3.50.30.30:FF:000003">
    <property type="entry name" value="E3 ubiquitin-protein ligase RNF128"/>
    <property type="match status" value="1"/>
</dbReference>
<dbReference type="FunFam" id="3.30.40.10:FF:000009">
    <property type="entry name" value="E3 ubiquitin-protein ligase RNF130"/>
    <property type="match status" value="1"/>
</dbReference>
<dbReference type="Gene3D" id="3.50.30.30">
    <property type="match status" value="1"/>
</dbReference>
<dbReference type="Gene3D" id="3.30.40.10">
    <property type="entry name" value="Zinc/RING finger domain, C3HC4 (zinc finger)"/>
    <property type="match status" value="1"/>
</dbReference>
<dbReference type="InterPro" id="IPR046450">
    <property type="entry name" value="PA_dom_sf"/>
</dbReference>
<dbReference type="InterPro" id="IPR003137">
    <property type="entry name" value="PA_domain"/>
</dbReference>
<dbReference type="InterPro" id="IPR001841">
    <property type="entry name" value="Znf_RING"/>
</dbReference>
<dbReference type="InterPro" id="IPR013083">
    <property type="entry name" value="Znf_RING/FYVE/PHD"/>
</dbReference>
<dbReference type="InterPro" id="IPR051073">
    <property type="entry name" value="ZNRF3_Arkadia_E3_ligases"/>
</dbReference>
<dbReference type="PANTHER" id="PTHR16200">
    <property type="entry name" value="RING ZINC FINGER"/>
    <property type="match status" value="1"/>
</dbReference>
<dbReference type="Pfam" id="PF02225">
    <property type="entry name" value="PA"/>
    <property type="match status" value="1"/>
</dbReference>
<dbReference type="Pfam" id="PF13639">
    <property type="entry name" value="zf-RING_2"/>
    <property type="match status" value="1"/>
</dbReference>
<dbReference type="SMART" id="SM00184">
    <property type="entry name" value="RING"/>
    <property type="match status" value="1"/>
</dbReference>
<dbReference type="SUPFAM" id="SSF52025">
    <property type="entry name" value="PA domain"/>
    <property type="match status" value="1"/>
</dbReference>
<dbReference type="SUPFAM" id="SSF57850">
    <property type="entry name" value="RING/U-box"/>
    <property type="match status" value="1"/>
</dbReference>
<dbReference type="PROSITE" id="PS50089">
    <property type="entry name" value="ZF_RING_2"/>
    <property type="match status" value="1"/>
</dbReference>